<sequence length="334" mass="38445">MRFEEFKYVRKGVIVGLLIMLLYIIWPFIDVLAYSCAFAYMALPVYNILRKKFNKTISAGLAISIYILPIMTITIYALLTFMEIILSFNTKSIEPYINEILSIYNSFMLERIINNEQIIAKYIDEFIKYLVSQFSGKIIDVGYLIVKVIMVLFLTFYFLRDGDKAKNLIISFVPDEYKEKMRIYLSYLHDSYKNLFISCVSLSIIITILSYIGYLILGVPYAELFAIITGIFALLPILGGWMVYISIAIYFFLIHDYTKAVFMFIYGELFLSIAPDFVIRPYLVKKEVDIHPVLVVIAFLMAPLSLGLSGFAIGPLVVGALNAFYLAKYRDKKI</sequence>
<proteinExistence type="inferred from homology"/>
<comment type="subcellular location">
    <subcellularLocation>
        <location evidence="2">Cell membrane</location>
        <topology evidence="2">Multi-pass membrane protein</topology>
    </subcellularLocation>
</comment>
<comment type="similarity">
    <text evidence="2">Belongs to the autoinducer-2 exporter (AI-2E) (TC 2.A.86) family.</text>
</comment>
<organism>
    <name type="scientific">Methanocaldococcus jannaschii (strain ATCC 43067 / DSM 2661 / JAL-1 / JCM 10045 / NBRC 100440)</name>
    <name type="common">Methanococcus jannaschii</name>
    <dbReference type="NCBI Taxonomy" id="243232"/>
    <lineage>
        <taxon>Archaea</taxon>
        <taxon>Methanobacteriati</taxon>
        <taxon>Methanobacteriota</taxon>
        <taxon>Methanomada group</taxon>
        <taxon>Methanococci</taxon>
        <taxon>Methanococcales</taxon>
        <taxon>Methanocaldococcaceae</taxon>
        <taxon>Methanocaldococcus</taxon>
    </lineage>
</organism>
<reference key="1">
    <citation type="journal article" date="1996" name="Science">
        <title>Complete genome sequence of the methanogenic archaeon, Methanococcus jannaschii.</title>
        <authorList>
            <person name="Bult C.J."/>
            <person name="White O."/>
            <person name="Olsen G.J."/>
            <person name="Zhou L."/>
            <person name="Fleischmann R.D."/>
            <person name="Sutton G.G."/>
            <person name="Blake J.A."/>
            <person name="FitzGerald L.M."/>
            <person name="Clayton R.A."/>
            <person name="Gocayne J.D."/>
            <person name="Kerlavage A.R."/>
            <person name="Dougherty B.A."/>
            <person name="Tomb J.-F."/>
            <person name="Adams M.D."/>
            <person name="Reich C.I."/>
            <person name="Overbeek R."/>
            <person name="Kirkness E.F."/>
            <person name="Weinstock K.G."/>
            <person name="Merrick J.M."/>
            <person name="Glodek A."/>
            <person name="Scott J.L."/>
            <person name="Geoghagen N.S.M."/>
            <person name="Weidman J.F."/>
            <person name="Fuhrmann J.L."/>
            <person name="Nguyen D."/>
            <person name="Utterback T.R."/>
            <person name="Kelley J.M."/>
            <person name="Peterson J.D."/>
            <person name="Sadow P.W."/>
            <person name="Hanna M.C."/>
            <person name="Cotton M.D."/>
            <person name="Roberts K.M."/>
            <person name="Hurst M.A."/>
            <person name="Kaine B.P."/>
            <person name="Borodovsky M."/>
            <person name="Klenk H.-P."/>
            <person name="Fraser C.M."/>
            <person name="Smith H.O."/>
            <person name="Woese C.R."/>
            <person name="Venter J.C."/>
        </authorList>
    </citation>
    <scope>NUCLEOTIDE SEQUENCE [LARGE SCALE GENOMIC DNA]</scope>
    <source>
        <strain>ATCC 43067 / DSM 2661 / JAL-1 / JCM 10045 / NBRC 100440</strain>
    </source>
</reference>
<name>Y1177_METJA</name>
<protein>
    <recommendedName>
        <fullName>Putative transport protein MJ1177</fullName>
    </recommendedName>
</protein>
<evidence type="ECO:0000255" key="1"/>
<evidence type="ECO:0000305" key="2"/>
<gene>
    <name type="ordered locus">MJ1177</name>
</gene>
<dbReference type="EMBL" id="L77117">
    <property type="protein sequence ID" value="AAB99180.1"/>
    <property type="molecule type" value="Genomic_DNA"/>
</dbReference>
<dbReference type="PIR" id="A64447">
    <property type="entry name" value="A64447"/>
</dbReference>
<dbReference type="RefSeq" id="WP_010870691.1">
    <property type="nucleotide sequence ID" value="NC_000909.1"/>
</dbReference>
<dbReference type="SMR" id="Q58578"/>
<dbReference type="FunCoup" id="Q58578">
    <property type="interactions" value="2"/>
</dbReference>
<dbReference type="STRING" id="243232.MJ_1177"/>
<dbReference type="PaxDb" id="243232-MJ_1177"/>
<dbReference type="DNASU" id="1452076"/>
<dbReference type="EnsemblBacteria" id="AAB99180">
    <property type="protein sequence ID" value="AAB99180"/>
    <property type="gene ID" value="MJ_1177"/>
</dbReference>
<dbReference type="GeneID" id="1452076"/>
<dbReference type="KEGG" id="mja:MJ_1177"/>
<dbReference type="eggNOG" id="arCOG02642">
    <property type="taxonomic scope" value="Archaea"/>
</dbReference>
<dbReference type="HOGENOM" id="CLU_041771_3_0_2"/>
<dbReference type="InParanoid" id="Q58578"/>
<dbReference type="OrthoDB" id="137390at2157"/>
<dbReference type="PhylomeDB" id="Q58578"/>
<dbReference type="Proteomes" id="UP000000805">
    <property type="component" value="Chromosome"/>
</dbReference>
<dbReference type="GO" id="GO:0005886">
    <property type="term" value="C:plasma membrane"/>
    <property type="evidence" value="ECO:0007669"/>
    <property type="project" value="UniProtKB-SubCell"/>
</dbReference>
<dbReference type="InterPro" id="IPR002549">
    <property type="entry name" value="AI-2E-like"/>
</dbReference>
<dbReference type="PANTHER" id="PTHR21716">
    <property type="entry name" value="TRANSMEMBRANE PROTEIN"/>
    <property type="match status" value="1"/>
</dbReference>
<dbReference type="PANTHER" id="PTHR21716:SF71">
    <property type="entry name" value="TRANSPORT PROTEIN MJ1177-RELATED"/>
    <property type="match status" value="1"/>
</dbReference>
<dbReference type="Pfam" id="PF01594">
    <property type="entry name" value="AI-2E_transport"/>
    <property type="match status" value="1"/>
</dbReference>
<keyword id="KW-1003">Cell membrane</keyword>
<keyword id="KW-0472">Membrane</keyword>
<keyword id="KW-1185">Reference proteome</keyword>
<keyword id="KW-0812">Transmembrane</keyword>
<keyword id="KW-1133">Transmembrane helix</keyword>
<keyword id="KW-0813">Transport</keyword>
<accession>Q58578</accession>
<feature type="chain" id="PRO_0000148326" description="Putative transport protein MJ1177">
    <location>
        <begin position="1"/>
        <end position="334"/>
    </location>
</feature>
<feature type="transmembrane region" description="Helical" evidence="1">
    <location>
        <begin position="13"/>
        <end position="33"/>
    </location>
</feature>
<feature type="transmembrane region" description="Helical" evidence="1">
    <location>
        <begin position="61"/>
        <end position="81"/>
    </location>
</feature>
<feature type="transmembrane region" description="Helical" evidence="1">
    <location>
        <begin position="138"/>
        <end position="158"/>
    </location>
</feature>
<feature type="transmembrane region" description="Helical" evidence="1">
    <location>
        <begin position="191"/>
        <end position="211"/>
    </location>
</feature>
<feature type="transmembrane region" description="Helical" evidence="1">
    <location>
        <begin position="234"/>
        <end position="254"/>
    </location>
</feature>
<feature type="transmembrane region" description="Helical" evidence="1">
    <location>
        <begin position="259"/>
        <end position="279"/>
    </location>
</feature>
<feature type="transmembrane region" description="Helical" evidence="1">
    <location>
        <begin position="293"/>
        <end position="313"/>
    </location>
</feature>